<evidence type="ECO:0000255" key="1">
    <source>
        <dbReference type="HAMAP-Rule" id="MF_00359"/>
    </source>
</evidence>
<evidence type="ECO:0000305" key="2"/>
<comment type="similarity">
    <text evidence="1">Belongs to the eukaryotic ribosomal protein eS1 family.</text>
</comment>
<name>RS3A_METM7</name>
<sequence length="224" mass="25304">MARMKARSAKGKRVAKDTWKSKVWYDIYTPQSFGGDVIGQTPANDPATLIGRISEISLRDLTNEHSKHMTRMYFKVDGVSGNNATSQFVGHDTTREYLKSQVRRRRSKINAIVDVRTKDGFKLRVKALVLTAVRARDHHKTEIRVKMEQIIKDMAKETAFAEFVHAMLMGGLGSKIYGDCKKMFPLKRVEIFKSEVLEFGKVVEAPVEEAAVEAPVEEAAETQE</sequence>
<proteinExistence type="inferred from homology"/>
<keyword id="KW-0687">Ribonucleoprotein</keyword>
<keyword id="KW-0689">Ribosomal protein</keyword>
<dbReference type="EMBL" id="CP000745">
    <property type="protein sequence ID" value="ABR66751.1"/>
    <property type="molecule type" value="Genomic_DNA"/>
</dbReference>
<dbReference type="SMR" id="A6VJX5"/>
<dbReference type="STRING" id="426368.MmarC7_1695"/>
<dbReference type="KEGG" id="mmz:MmarC7_1695"/>
<dbReference type="eggNOG" id="arCOG04186">
    <property type="taxonomic scope" value="Archaea"/>
</dbReference>
<dbReference type="HOGENOM" id="CLU_062507_1_0_2"/>
<dbReference type="OrthoDB" id="30639at2157"/>
<dbReference type="GO" id="GO:1990904">
    <property type="term" value="C:ribonucleoprotein complex"/>
    <property type="evidence" value="ECO:0007669"/>
    <property type="project" value="UniProtKB-KW"/>
</dbReference>
<dbReference type="GO" id="GO:0005840">
    <property type="term" value="C:ribosome"/>
    <property type="evidence" value="ECO:0007669"/>
    <property type="project" value="UniProtKB-KW"/>
</dbReference>
<dbReference type="GO" id="GO:0003735">
    <property type="term" value="F:structural constituent of ribosome"/>
    <property type="evidence" value="ECO:0007669"/>
    <property type="project" value="InterPro"/>
</dbReference>
<dbReference type="GO" id="GO:0006412">
    <property type="term" value="P:translation"/>
    <property type="evidence" value="ECO:0007669"/>
    <property type="project" value="UniProtKB-UniRule"/>
</dbReference>
<dbReference type="HAMAP" id="MF_00359">
    <property type="entry name" value="Ribosomal_eS1"/>
    <property type="match status" value="1"/>
</dbReference>
<dbReference type="InterPro" id="IPR001593">
    <property type="entry name" value="Ribosomal_eS1"/>
</dbReference>
<dbReference type="InterPro" id="IPR030838">
    <property type="entry name" value="Ribosomal_eS1_arc"/>
</dbReference>
<dbReference type="InterPro" id="IPR018281">
    <property type="entry name" value="Ribosomal_eS1_CS"/>
</dbReference>
<dbReference type="NCBIfam" id="NF003142">
    <property type="entry name" value="PRK04057.1"/>
    <property type="match status" value="1"/>
</dbReference>
<dbReference type="PANTHER" id="PTHR11830">
    <property type="entry name" value="40S RIBOSOMAL PROTEIN S3A"/>
    <property type="match status" value="1"/>
</dbReference>
<dbReference type="Pfam" id="PF01015">
    <property type="entry name" value="Ribosomal_S3Ae"/>
    <property type="match status" value="1"/>
</dbReference>
<dbReference type="SMART" id="SM01397">
    <property type="entry name" value="Ribosomal_S3Ae"/>
    <property type="match status" value="1"/>
</dbReference>
<dbReference type="PROSITE" id="PS01191">
    <property type="entry name" value="RIBOSOMAL_S3AE"/>
    <property type="match status" value="1"/>
</dbReference>
<reference key="1">
    <citation type="submission" date="2007-06" db="EMBL/GenBank/DDBJ databases">
        <title>Complete sequence of Methanococcus maripaludis C7.</title>
        <authorList>
            <consortium name="US DOE Joint Genome Institute"/>
            <person name="Copeland A."/>
            <person name="Lucas S."/>
            <person name="Lapidus A."/>
            <person name="Barry K."/>
            <person name="Glavina del Rio T."/>
            <person name="Dalin E."/>
            <person name="Tice H."/>
            <person name="Pitluck S."/>
            <person name="Clum A."/>
            <person name="Schmutz J."/>
            <person name="Larimer F."/>
            <person name="Land M."/>
            <person name="Hauser L."/>
            <person name="Kyrpides N."/>
            <person name="Anderson I."/>
            <person name="Sieprawska-Lupa M."/>
            <person name="Whitman W.B."/>
            <person name="Richardson P."/>
        </authorList>
    </citation>
    <scope>NUCLEOTIDE SEQUENCE [LARGE SCALE GENOMIC DNA]</scope>
    <source>
        <strain>C7 / ATCC BAA-1331</strain>
    </source>
</reference>
<gene>
    <name evidence="1" type="primary">rps3ae</name>
    <name type="ordered locus">MmarC7_1695</name>
</gene>
<feature type="chain" id="PRO_1000005193" description="Small ribosomal subunit protein eS1">
    <location>
        <begin position="1"/>
        <end position="224"/>
    </location>
</feature>
<accession>A6VJX5</accession>
<protein>
    <recommendedName>
        <fullName evidence="1">Small ribosomal subunit protein eS1</fullName>
    </recommendedName>
    <alternativeName>
        <fullName evidence="2">30S ribosomal protein S3Ae</fullName>
    </alternativeName>
    <alternativeName>
        <fullName evidence="1">Ribosomal protein S1e</fullName>
    </alternativeName>
</protein>
<organism>
    <name type="scientific">Methanococcus maripaludis (strain C7 / ATCC BAA-1331)</name>
    <dbReference type="NCBI Taxonomy" id="426368"/>
    <lineage>
        <taxon>Archaea</taxon>
        <taxon>Methanobacteriati</taxon>
        <taxon>Methanobacteriota</taxon>
        <taxon>Methanomada group</taxon>
        <taxon>Methanococci</taxon>
        <taxon>Methanococcales</taxon>
        <taxon>Methanococcaceae</taxon>
        <taxon>Methanococcus</taxon>
    </lineage>
</organism>